<name>RS7_BACCZ</name>
<gene>
    <name evidence="1" type="primary">rpsG</name>
    <name type="ordered locus">BCE33L0100</name>
</gene>
<protein>
    <recommendedName>
        <fullName evidence="1">Small ribosomal subunit protein uS7</fullName>
    </recommendedName>
    <alternativeName>
        <fullName evidence="2">30S ribosomal protein S7</fullName>
    </alternativeName>
</protein>
<proteinExistence type="inferred from homology"/>
<sequence length="156" mass="17884">MPRKGPVAKRDVLPDPMYNSKLVTRLINKMMVDGKKGKSQTILYNAFDIVSERTGKEPMEVFEQALKNIMPVLEVRARRVGGANYQVPVEVRPERRTTLGLRWLVNYARLRGEKTMEERLANEILDAANNAGASVKKREDTHKMAEANKAFAHYRW</sequence>
<organism>
    <name type="scientific">Bacillus cereus (strain ZK / E33L)</name>
    <dbReference type="NCBI Taxonomy" id="288681"/>
    <lineage>
        <taxon>Bacteria</taxon>
        <taxon>Bacillati</taxon>
        <taxon>Bacillota</taxon>
        <taxon>Bacilli</taxon>
        <taxon>Bacillales</taxon>
        <taxon>Bacillaceae</taxon>
        <taxon>Bacillus</taxon>
        <taxon>Bacillus cereus group</taxon>
    </lineage>
</organism>
<accession>Q63H94</accession>
<comment type="function">
    <text evidence="1">One of the primary rRNA binding proteins, it binds directly to 16S rRNA where it nucleates assembly of the head domain of the 30S subunit. Is located at the subunit interface close to the decoding center, probably blocks exit of the E-site tRNA.</text>
</comment>
<comment type="subunit">
    <text evidence="1">Part of the 30S ribosomal subunit. Contacts proteins S9 and S11.</text>
</comment>
<comment type="similarity">
    <text evidence="1">Belongs to the universal ribosomal protein uS7 family.</text>
</comment>
<dbReference type="EMBL" id="CP000001">
    <property type="protein sequence ID" value="AAU20132.1"/>
    <property type="molecule type" value="Genomic_DNA"/>
</dbReference>
<dbReference type="RefSeq" id="WP_001137493.1">
    <property type="nucleotide sequence ID" value="NZ_CP009968.1"/>
</dbReference>
<dbReference type="SMR" id="Q63H94"/>
<dbReference type="GeneID" id="93010947"/>
<dbReference type="KEGG" id="bcz:BCE33L0100"/>
<dbReference type="PATRIC" id="fig|288681.22.peg.51"/>
<dbReference type="Proteomes" id="UP000002612">
    <property type="component" value="Chromosome"/>
</dbReference>
<dbReference type="GO" id="GO:0015935">
    <property type="term" value="C:small ribosomal subunit"/>
    <property type="evidence" value="ECO:0007669"/>
    <property type="project" value="InterPro"/>
</dbReference>
<dbReference type="GO" id="GO:0019843">
    <property type="term" value="F:rRNA binding"/>
    <property type="evidence" value="ECO:0007669"/>
    <property type="project" value="UniProtKB-UniRule"/>
</dbReference>
<dbReference type="GO" id="GO:0003735">
    <property type="term" value="F:structural constituent of ribosome"/>
    <property type="evidence" value="ECO:0007669"/>
    <property type="project" value="InterPro"/>
</dbReference>
<dbReference type="GO" id="GO:0000049">
    <property type="term" value="F:tRNA binding"/>
    <property type="evidence" value="ECO:0007669"/>
    <property type="project" value="UniProtKB-UniRule"/>
</dbReference>
<dbReference type="GO" id="GO:0006412">
    <property type="term" value="P:translation"/>
    <property type="evidence" value="ECO:0007669"/>
    <property type="project" value="UniProtKB-UniRule"/>
</dbReference>
<dbReference type="CDD" id="cd14869">
    <property type="entry name" value="uS7_Bacteria"/>
    <property type="match status" value="1"/>
</dbReference>
<dbReference type="FunFam" id="1.10.455.10:FF:000001">
    <property type="entry name" value="30S ribosomal protein S7"/>
    <property type="match status" value="1"/>
</dbReference>
<dbReference type="Gene3D" id="1.10.455.10">
    <property type="entry name" value="Ribosomal protein S7 domain"/>
    <property type="match status" value="1"/>
</dbReference>
<dbReference type="HAMAP" id="MF_00480_B">
    <property type="entry name" value="Ribosomal_uS7_B"/>
    <property type="match status" value="1"/>
</dbReference>
<dbReference type="InterPro" id="IPR000235">
    <property type="entry name" value="Ribosomal_uS7"/>
</dbReference>
<dbReference type="InterPro" id="IPR005717">
    <property type="entry name" value="Ribosomal_uS7_bac/org-type"/>
</dbReference>
<dbReference type="InterPro" id="IPR020606">
    <property type="entry name" value="Ribosomal_uS7_CS"/>
</dbReference>
<dbReference type="InterPro" id="IPR023798">
    <property type="entry name" value="Ribosomal_uS7_dom"/>
</dbReference>
<dbReference type="InterPro" id="IPR036823">
    <property type="entry name" value="Ribosomal_uS7_dom_sf"/>
</dbReference>
<dbReference type="NCBIfam" id="TIGR01029">
    <property type="entry name" value="rpsG_bact"/>
    <property type="match status" value="1"/>
</dbReference>
<dbReference type="PANTHER" id="PTHR11205">
    <property type="entry name" value="RIBOSOMAL PROTEIN S7"/>
    <property type="match status" value="1"/>
</dbReference>
<dbReference type="Pfam" id="PF00177">
    <property type="entry name" value="Ribosomal_S7"/>
    <property type="match status" value="1"/>
</dbReference>
<dbReference type="PIRSF" id="PIRSF002122">
    <property type="entry name" value="RPS7p_RPS7a_RPS5e_RPS7o"/>
    <property type="match status" value="1"/>
</dbReference>
<dbReference type="SUPFAM" id="SSF47973">
    <property type="entry name" value="Ribosomal protein S7"/>
    <property type="match status" value="1"/>
</dbReference>
<dbReference type="PROSITE" id="PS00052">
    <property type="entry name" value="RIBOSOMAL_S7"/>
    <property type="match status" value="1"/>
</dbReference>
<feature type="chain" id="PRO_0000124213" description="Small ribosomal subunit protein uS7">
    <location>
        <begin position="1"/>
        <end position="156"/>
    </location>
</feature>
<keyword id="KW-0687">Ribonucleoprotein</keyword>
<keyword id="KW-0689">Ribosomal protein</keyword>
<keyword id="KW-0694">RNA-binding</keyword>
<keyword id="KW-0699">rRNA-binding</keyword>
<keyword id="KW-0820">tRNA-binding</keyword>
<evidence type="ECO:0000255" key="1">
    <source>
        <dbReference type="HAMAP-Rule" id="MF_00480"/>
    </source>
</evidence>
<evidence type="ECO:0000305" key="2"/>
<reference key="1">
    <citation type="journal article" date="2006" name="J. Bacteriol.">
        <title>Pathogenomic sequence analysis of Bacillus cereus and Bacillus thuringiensis isolates closely related to Bacillus anthracis.</title>
        <authorList>
            <person name="Han C.S."/>
            <person name="Xie G."/>
            <person name="Challacombe J.F."/>
            <person name="Altherr M.R."/>
            <person name="Bhotika S.S."/>
            <person name="Bruce D."/>
            <person name="Campbell C.S."/>
            <person name="Campbell M.L."/>
            <person name="Chen J."/>
            <person name="Chertkov O."/>
            <person name="Cleland C."/>
            <person name="Dimitrijevic M."/>
            <person name="Doggett N.A."/>
            <person name="Fawcett J.J."/>
            <person name="Glavina T."/>
            <person name="Goodwin L.A."/>
            <person name="Hill K.K."/>
            <person name="Hitchcock P."/>
            <person name="Jackson P.J."/>
            <person name="Keim P."/>
            <person name="Kewalramani A.R."/>
            <person name="Longmire J."/>
            <person name="Lucas S."/>
            <person name="Malfatti S."/>
            <person name="McMurry K."/>
            <person name="Meincke L.J."/>
            <person name="Misra M."/>
            <person name="Moseman B.L."/>
            <person name="Mundt M."/>
            <person name="Munk A.C."/>
            <person name="Okinaka R.T."/>
            <person name="Parson-Quintana B."/>
            <person name="Reilly L.P."/>
            <person name="Richardson P."/>
            <person name="Robinson D.L."/>
            <person name="Rubin E."/>
            <person name="Saunders E."/>
            <person name="Tapia R."/>
            <person name="Tesmer J.G."/>
            <person name="Thayer N."/>
            <person name="Thompson L.S."/>
            <person name="Tice H."/>
            <person name="Ticknor L.O."/>
            <person name="Wills P.L."/>
            <person name="Brettin T.S."/>
            <person name="Gilna P."/>
        </authorList>
    </citation>
    <scope>NUCLEOTIDE SEQUENCE [LARGE SCALE GENOMIC DNA]</scope>
    <source>
        <strain>ZK / E33L</strain>
    </source>
</reference>